<keyword id="KW-0963">Cytoplasm</keyword>
<keyword id="KW-0396">Initiation factor</keyword>
<keyword id="KW-0648">Protein biosynthesis</keyword>
<keyword id="KW-1185">Reference proteome</keyword>
<keyword id="KW-0694">RNA-binding</keyword>
<accession>B4I9X1</accession>
<dbReference type="EMBL" id="CH480825">
    <property type="protein sequence ID" value="EDW44002.1"/>
    <property type="molecule type" value="Genomic_DNA"/>
</dbReference>
<dbReference type="SMR" id="B4I9X1"/>
<dbReference type="STRING" id="7238.B4I9X1"/>
<dbReference type="EnsemblMetazoa" id="FBtr0201855">
    <property type="protein sequence ID" value="FBpp0200347"/>
    <property type="gene ID" value="FBgn0173773"/>
</dbReference>
<dbReference type="EnsemblMetazoa" id="XM_002040495.2">
    <property type="protein sequence ID" value="XP_002040531.1"/>
    <property type="gene ID" value="LOC6616166"/>
</dbReference>
<dbReference type="GeneID" id="6616166"/>
<dbReference type="KEGG" id="dse:6616166"/>
<dbReference type="CTD" id="31243"/>
<dbReference type="HOGENOM" id="CLU_034595_0_0_1"/>
<dbReference type="OMA" id="ICQGDHF"/>
<dbReference type="OrthoDB" id="8531at7215"/>
<dbReference type="PhylomeDB" id="B4I9X1"/>
<dbReference type="Proteomes" id="UP000001292">
    <property type="component" value="Unassembled WGS sequence"/>
</dbReference>
<dbReference type="GO" id="GO:0016282">
    <property type="term" value="C:eukaryotic 43S preinitiation complex"/>
    <property type="evidence" value="ECO:0007669"/>
    <property type="project" value="UniProtKB-UniRule"/>
</dbReference>
<dbReference type="GO" id="GO:0033290">
    <property type="term" value="C:eukaryotic 48S preinitiation complex"/>
    <property type="evidence" value="ECO:0007669"/>
    <property type="project" value="UniProtKB-UniRule"/>
</dbReference>
<dbReference type="GO" id="GO:0005852">
    <property type="term" value="C:eukaryotic translation initiation factor 3 complex"/>
    <property type="evidence" value="ECO:0007669"/>
    <property type="project" value="UniProtKB-UniRule"/>
</dbReference>
<dbReference type="GO" id="GO:0003723">
    <property type="term" value="F:RNA binding"/>
    <property type="evidence" value="ECO:0007669"/>
    <property type="project" value="UniProtKB-UniRule"/>
</dbReference>
<dbReference type="GO" id="GO:0003743">
    <property type="term" value="F:translation initiation factor activity"/>
    <property type="evidence" value="ECO:0007669"/>
    <property type="project" value="UniProtKB-UniRule"/>
</dbReference>
<dbReference type="GO" id="GO:0001732">
    <property type="term" value="P:formation of cytoplasmic translation initiation complex"/>
    <property type="evidence" value="ECO:0007669"/>
    <property type="project" value="UniProtKB-UniRule"/>
</dbReference>
<dbReference type="CDD" id="cd12933">
    <property type="entry name" value="eIF3G"/>
    <property type="match status" value="1"/>
</dbReference>
<dbReference type="CDD" id="cd12408">
    <property type="entry name" value="RRM_eIF3G_like"/>
    <property type="match status" value="1"/>
</dbReference>
<dbReference type="FunFam" id="3.30.70.330:FF:000828">
    <property type="entry name" value="Eukaryotic translation initiation factor 3 subunit G"/>
    <property type="match status" value="1"/>
</dbReference>
<dbReference type="Gene3D" id="3.30.70.330">
    <property type="match status" value="1"/>
</dbReference>
<dbReference type="HAMAP" id="MF_03006">
    <property type="entry name" value="eIF3g"/>
    <property type="match status" value="1"/>
</dbReference>
<dbReference type="InterPro" id="IPR017334">
    <property type="entry name" value="eIF3_g"/>
</dbReference>
<dbReference type="InterPro" id="IPR024675">
    <property type="entry name" value="eIF3g_N"/>
</dbReference>
<dbReference type="InterPro" id="IPR034240">
    <property type="entry name" value="eIF3G_RRM"/>
</dbReference>
<dbReference type="InterPro" id="IPR012677">
    <property type="entry name" value="Nucleotide-bd_a/b_plait_sf"/>
</dbReference>
<dbReference type="InterPro" id="IPR035979">
    <property type="entry name" value="RBD_domain_sf"/>
</dbReference>
<dbReference type="InterPro" id="IPR000504">
    <property type="entry name" value="RRM_dom"/>
</dbReference>
<dbReference type="PANTHER" id="PTHR10352">
    <property type="entry name" value="EUKARYOTIC TRANSLATION INITIATION FACTOR 3 SUBUNIT G"/>
    <property type="match status" value="1"/>
</dbReference>
<dbReference type="Pfam" id="PF12353">
    <property type="entry name" value="eIF3g"/>
    <property type="match status" value="1"/>
</dbReference>
<dbReference type="Pfam" id="PF00076">
    <property type="entry name" value="RRM_1"/>
    <property type="match status" value="1"/>
</dbReference>
<dbReference type="PIRSF" id="PIRSF037949">
    <property type="entry name" value="Transl_init_eIF-3_RNA-bind"/>
    <property type="match status" value="1"/>
</dbReference>
<dbReference type="SMART" id="SM00360">
    <property type="entry name" value="RRM"/>
    <property type="match status" value="1"/>
</dbReference>
<dbReference type="SUPFAM" id="SSF54928">
    <property type="entry name" value="RNA-binding domain, RBD"/>
    <property type="match status" value="1"/>
</dbReference>
<dbReference type="PROSITE" id="PS50102">
    <property type="entry name" value="RRM"/>
    <property type="match status" value="1"/>
</dbReference>
<comment type="function">
    <text evidence="2">RNA-binding component of the eukaryotic translation initiation factor 3 (eIF-3) complex, which is involved in protein synthesis of a specialized repertoire of mRNAs and, together with other initiation factors, stimulates binding of mRNA and methionyl-tRNAi to the 40S ribosome. The eIF-3 complex specifically targets and initiates translation of a subset of mRNAs involved in cell proliferation. This subunit can bind 18S rRNA.</text>
</comment>
<comment type="subunit">
    <text evidence="2">Component of the eukaryotic translation initiation factor 3 (eIF-3) complex. The eIF-3 complex interacts with pix.</text>
</comment>
<comment type="subcellular location">
    <subcellularLocation>
        <location evidence="2">Cytoplasm</location>
    </subcellularLocation>
</comment>
<comment type="similarity">
    <text evidence="2">Belongs to the eIF-3 subunit G family.</text>
</comment>
<sequence length="269" mass="29994">MPGVETIKSSWADEVELDYGGLPPTTETVENGQKYVTEYKYNKDDKKTKVVRTYKISKQVVPKTVAKRRTWTKFGESKNDKPGPNSQTTMVSEEIFMQFLNSKEDEKANDPLLDPTKNIAKCRICNGEHWSVNCPYKGTAMDTNMMEKKASAAAAAAVDAPKSGKYVPPFLKDSQKGALGMRGRDDTAAIRISNLSESMTEADLEELVKKIGPQSKMYLARDKNTGLCKGFAYVHFKQRKDAAAAIEILNGHGYDHLILSVEWSKPQNN</sequence>
<feature type="chain" id="PRO_0000365421" description="Eukaryotic translation initiation factor 3 subunit G-1">
    <location>
        <begin position="1"/>
        <end position="269"/>
    </location>
</feature>
<feature type="domain" description="RRM" evidence="2">
    <location>
        <begin position="188"/>
        <end position="266"/>
    </location>
</feature>
<evidence type="ECO:0000250" key="1">
    <source>
        <dbReference type="UniProtKB" id="Q9W4X7"/>
    </source>
</evidence>
<evidence type="ECO:0000255" key="2">
    <source>
        <dbReference type="HAMAP-Rule" id="MF_03006"/>
    </source>
</evidence>
<gene>
    <name evidence="1" type="primary">eIF3g1</name>
    <name evidence="2" type="synonym">eIF3-S4</name>
    <name evidence="1" type="synonym">eIF3ga</name>
    <name type="ORF">GM18870</name>
</gene>
<organism>
    <name type="scientific">Drosophila sechellia</name>
    <name type="common">Fruit fly</name>
    <dbReference type="NCBI Taxonomy" id="7238"/>
    <lineage>
        <taxon>Eukaryota</taxon>
        <taxon>Metazoa</taxon>
        <taxon>Ecdysozoa</taxon>
        <taxon>Arthropoda</taxon>
        <taxon>Hexapoda</taxon>
        <taxon>Insecta</taxon>
        <taxon>Pterygota</taxon>
        <taxon>Neoptera</taxon>
        <taxon>Endopterygota</taxon>
        <taxon>Diptera</taxon>
        <taxon>Brachycera</taxon>
        <taxon>Muscomorpha</taxon>
        <taxon>Ephydroidea</taxon>
        <taxon>Drosophilidae</taxon>
        <taxon>Drosophila</taxon>
        <taxon>Sophophora</taxon>
    </lineage>
</organism>
<protein>
    <recommendedName>
        <fullName evidence="1">Eukaryotic translation initiation factor 3 subunit G-1</fullName>
    </recommendedName>
    <alternativeName>
        <fullName evidence="2">Eukaryotic translation initiation factor 3 RNA-binding subunit 1</fullName>
        <shortName evidence="2">eIF-3 RNA-binding subunit 1</shortName>
    </alternativeName>
    <alternativeName>
        <fullName evidence="2">Eukaryotic translation initiation factor 3 subunit 4-1</fullName>
    </alternativeName>
</protein>
<proteinExistence type="inferred from homology"/>
<reference key="1">
    <citation type="journal article" date="2007" name="Nature">
        <title>Evolution of genes and genomes on the Drosophila phylogeny.</title>
        <authorList>
            <consortium name="Drosophila 12 genomes consortium"/>
        </authorList>
    </citation>
    <scope>NUCLEOTIDE SEQUENCE [LARGE SCALE GENOMIC DNA]</scope>
    <source>
        <strain>Rob3c / Tucson 14021-0248.25</strain>
    </source>
</reference>
<name>EI3G1_DROSE</name>